<proteinExistence type="inferred from homology"/>
<sequence>MADQLNMNGLNLNGGEPRSYIPPHMRGKMGGPAPAGPPANLNGSAWAPQGNGYANGPRPAGGDSWANAPDFTPRGNGAPRGGNNWNPSGPPSFNKNAYGNPAAGAGGPGSAGGAGGAGGGAGQARGGGDGQWRDGKHIAGPANARLERELFGIADDPTKQQTGINFEKYDDIPVEASGQDVPEPVLKFTNPPLDDHLIKNIELAHYKVPTPVQKYSIPIVMGGRDLMACAQTGSGKTGGFLFPILSQAFQTGPSPIPANAAGSFGRTRKAYPTSLILAPTRELVSQIFDESRKFAYRSWVRPCVVYGGADIGSQLRQMERGCDLLVATPGRLVDLIERGRISLQNIKYLVLDEADRMLDMGFEPQIRRIVEGEDMPGVQNRQTLMFSATFPRDIQMLARDFLKDYVFLSVGRVGSTSENITQKVEYVEDIDKRSVLLDILHTHGAGLTLIFVETKRMADSLSDFLINQNFPATSIHGDRTQRERERALEMFRNGRCPILVATAVAARGLDIPNVTHVVNYDLPTDIDDYVHRIGRTGRAGNTGISTAFFNRGNRGVVRDLIELLKEANQEIPAFLENIAREGAGFGGGRGGRSGGRGRGGGANRDFRKFGGGGGGGFNGGGGFGGPPASGGYGGGGGFGGPPAPASYGPPPGQYGGGGYGGGGGAYGNPSAGGGQSWW</sequence>
<name>DED1_SCLS1</name>
<feature type="chain" id="PRO_0000310182" description="ATP-dependent RNA helicase ded1">
    <location>
        <begin position="1"/>
        <end position="678"/>
    </location>
</feature>
<feature type="domain" description="Helicase ATP-binding" evidence="2">
    <location>
        <begin position="217"/>
        <end position="408"/>
    </location>
</feature>
<feature type="domain" description="Helicase C-terminal" evidence="3">
    <location>
        <begin position="419"/>
        <end position="579"/>
    </location>
</feature>
<feature type="region of interest" description="Disordered" evidence="4">
    <location>
        <begin position="1"/>
        <end position="137"/>
    </location>
</feature>
<feature type="region of interest" description="Disordered" evidence="4">
    <location>
        <begin position="585"/>
        <end position="678"/>
    </location>
</feature>
<feature type="short sequence motif" description="Q motif">
    <location>
        <begin position="186"/>
        <end position="214"/>
    </location>
</feature>
<feature type="short sequence motif" description="DEAD box">
    <location>
        <begin position="352"/>
        <end position="355"/>
    </location>
</feature>
<feature type="compositionally biased region" description="Low complexity" evidence="4">
    <location>
        <begin position="1"/>
        <end position="15"/>
    </location>
</feature>
<feature type="compositionally biased region" description="Low complexity" evidence="4">
    <location>
        <begin position="73"/>
        <end position="87"/>
    </location>
</feature>
<feature type="compositionally biased region" description="Gly residues" evidence="4">
    <location>
        <begin position="104"/>
        <end position="130"/>
    </location>
</feature>
<feature type="compositionally biased region" description="Gly residues" evidence="4">
    <location>
        <begin position="585"/>
        <end position="602"/>
    </location>
</feature>
<feature type="compositionally biased region" description="Gly residues" evidence="4">
    <location>
        <begin position="609"/>
        <end position="640"/>
    </location>
</feature>
<feature type="compositionally biased region" description="Pro residues" evidence="4">
    <location>
        <begin position="641"/>
        <end position="652"/>
    </location>
</feature>
<feature type="compositionally biased region" description="Gly residues" evidence="4">
    <location>
        <begin position="653"/>
        <end position="678"/>
    </location>
</feature>
<feature type="binding site" evidence="2">
    <location>
        <begin position="230"/>
        <end position="237"/>
    </location>
    <ligand>
        <name>ATP</name>
        <dbReference type="ChEBI" id="CHEBI:30616"/>
    </ligand>
</feature>
<organism>
    <name type="scientific">Sclerotinia sclerotiorum (strain ATCC 18683 / 1980 / Ss-1)</name>
    <name type="common">White mold</name>
    <name type="synonym">Whetzelinia sclerotiorum</name>
    <dbReference type="NCBI Taxonomy" id="665079"/>
    <lineage>
        <taxon>Eukaryota</taxon>
        <taxon>Fungi</taxon>
        <taxon>Dikarya</taxon>
        <taxon>Ascomycota</taxon>
        <taxon>Pezizomycotina</taxon>
        <taxon>Leotiomycetes</taxon>
        <taxon>Helotiales</taxon>
        <taxon>Sclerotiniaceae</taxon>
        <taxon>Sclerotinia</taxon>
    </lineage>
</organism>
<comment type="function">
    <text evidence="1">ATP-binding RNA helicase involved in translation initiation. Remodels RNA in response to ADP and ATP concentrations by facilitating disruption, but also formation of RNA duplexes (By similarity).</text>
</comment>
<comment type="catalytic activity">
    <reaction>
        <text>ATP + H2O = ADP + phosphate + H(+)</text>
        <dbReference type="Rhea" id="RHEA:13065"/>
        <dbReference type="ChEBI" id="CHEBI:15377"/>
        <dbReference type="ChEBI" id="CHEBI:15378"/>
        <dbReference type="ChEBI" id="CHEBI:30616"/>
        <dbReference type="ChEBI" id="CHEBI:43474"/>
        <dbReference type="ChEBI" id="CHEBI:456216"/>
        <dbReference type="EC" id="3.6.4.13"/>
    </reaction>
</comment>
<comment type="subcellular location">
    <subcellularLocation>
        <location evidence="1">Cytoplasm</location>
    </subcellularLocation>
</comment>
<comment type="domain">
    <text>The Q motif is unique to and characteristic of the DEAD box family of RNA helicases and controls ATP binding and hydrolysis.</text>
</comment>
<comment type="similarity">
    <text evidence="5">Belongs to the DEAD box helicase family. DDX3/DED1 subfamily.</text>
</comment>
<evidence type="ECO:0000250" key="1"/>
<evidence type="ECO:0000255" key="2">
    <source>
        <dbReference type="PROSITE-ProRule" id="PRU00541"/>
    </source>
</evidence>
<evidence type="ECO:0000255" key="3">
    <source>
        <dbReference type="PROSITE-ProRule" id="PRU00542"/>
    </source>
</evidence>
<evidence type="ECO:0000256" key="4">
    <source>
        <dbReference type="SAM" id="MobiDB-lite"/>
    </source>
</evidence>
<evidence type="ECO:0000305" key="5"/>
<protein>
    <recommendedName>
        <fullName>ATP-dependent RNA helicase ded1</fullName>
        <ecNumber>3.6.4.13</ecNumber>
    </recommendedName>
</protein>
<keyword id="KW-0067">ATP-binding</keyword>
<keyword id="KW-0963">Cytoplasm</keyword>
<keyword id="KW-0347">Helicase</keyword>
<keyword id="KW-0378">Hydrolase</keyword>
<keyword id="KW-0396">Initiation factor</keyword>
<keyword id="KW-0547">Nucleotide-binding</keyword>
<keyword id="KW-0648">Protein biosynthesis</keyword>
<keyword id="KW-1185">Reference proteome</keyword>
<keyword id="KW-0694">RNA-binding</keyword>
<gene>
    <name type="primary">ded1</name>
    <name type="ORF">SS1G_05629</name>
</gene>
<reference key="1">
    <citation type="journal article" date="2011" name="PLoS Genet.">
        <title>Genomic analysis of the necrotrophic fungal pathogens Sclerotinia sclerotiorum and Botrytis cinerea.</title>
        <authorList>
            <person name="Amselem J."/>
            <person name="Cuomo C.A."/>
            <person name="van Kan J.A.L."/>
            <person name="Viaud M."/>
            <person name="Benito E.P."/>
            <person name="Couloux A."/>
            <person name="Coutinho P.M."/>
            <person name="de Vries R.P."/>
            <person name="Dyer P.S."/>
            <person name="Fillinger S."/>
            <person name="Fournier E."/>
            <person name="Gout L."/>
            <person name="Hahn M."/>
            <person name="Kohn L."/>
            <person name="Lapalu N."/>
            <person name="Plummer K.M."/>
            <person name="Pradier J.-M."/>
            <person name="Quevillon E."/>
            <person name="Sharon A."/>
            <person name="Simon A."/>
            <person name="ten Have A."/>
            <person name="Tudzynski B."/>
            <person name="Tudzynski P."/>
            <person name="Wincker P."/>
            <person name="Andrew M."/>
            <person name="Anthouard V."/>
            <person name="Beever R.E."/>
            <person name="Beffa R."/>
            <person name="Benoit I."/>
            <person name="Bouzid O."/>
            <person name="Brault B."/>
            <person name="Chen Z."/>
            <person name="Choquer M."/>
            <person name="Collemare J."/>
            <person name="Cotton P."/>
            <person name="Danchin E.G."/>
            <person name="Da Silva C."/>
            <person name="Gautier A."/>
            <person name="Giraud C."/>
            <person name="Giraud T."/>
            <person name="Gonzalez C."/>
            <person name="Grossetete S."/>
            <person name="Gueldener U."/>
            <person name="Henrissat B."/>
            <person name="Howlett B.J."/>
            <person name="Kodira C."/>
            <person name="Kretschmer M."/>
            <person name="Lappartient A."/>
            <person name="Leroch M."/>
            <person name="Levis C."/>
            <person name="Mauceli E."/>
            <person name="Neuveglise C."/>
            <person name="Oeser B."/>
            <person name="Pearson M."/>
            <person name="Poulain J."/>
            <person name="Poussereau N."/>
            <person name="Quesneville H."/>
            <person name="Rascle C."/>
            <person name="Schumacher J."/>
            <person name="Segurens B."/>
            <person name="Sexton A."/>
            <person name="Silva E."/>
            <person name="Sirven C."/>
            <person name="Soanes D.M."/>
            <person name="Talbot N.J."/>
            <person name="Templeton M."/>
            <person name="Yandava C."/>
            <person name="Yarden O."/>
            <person name="Zeng Q."/>
            <person name="Rollins J.A."/>
            <person name="Lebrun M.-H."/>
            <person name="Dickman M."/>
        </authorList>
    </citation>
    <scope>NUCLEOTIDE SEQUENCE [LARGE SCALE GENOMIC DNA]</scope>
    <source>
        <strain>ATCC 18683 / 1980 / Ss-1</strain>
    </source>
</reference>
<accession>A7EJY3</accession>
<dbReference type="EC" id="3.6.4.13"/>
<dbReference type="EMBL" id="CH476627">
    <property type="protein sequence ID" value="EDO03149.1"/>
    <property type="molecule type" value="Genomic_DNA"/>
</dbReference>
<dbReference type="RefSeq" id="XP_001592708.1">
    <property type="nucleotide sequence ID" value="XM_001592658.1"/>
</dbReference>
<dbReference type="SMR" id="A7EJY3"/>
<dbReference type="FunCoup" id="A7EJY3">
    <property type="interactions" value="1194"/>
</dbReference>
<dbReference type="STRING" id="665079.A7EJY3"/>
<dbReference type="EnsemblFungi" id="EDO03149">
    <property type="protein sequence ID" value="EDO03149"/>
    <property type="gene ID" value="SS1G_05629"/>
</dbReference>
<dbReference type="GeneID" id="5488949"/>
<dbReference type="KEGG" id="ssl:SS1G_05629"/>
<dbReference type="VEuPathDB" id="FungiDB:sscle_05g048480"/>
<dbReference type="eggNOG" id="KOG0335">
    <property type="taxonomic scope" value="Eukaryota"/>
</dbReference>
<dbReference type="HOGENOM" id="CLU_003041_16_3_1"/>
<dbReference type="InParanoid" id="A7EJY3"/>
<dbReference type="OMA" id="CYRSWVR"/>
<dbReference type="OrthoDB" id="196131at2759"/>
<dbReference type="Proteomes" id="UP000001312">
    <property type="component" value="Unassembled WGS sequence"/>
</dbReference>
<dbReference type="GO" id="GO:0010494">
    <property type="term" value="C:cytoplasmic stress granule"/>
    <property type="evidence" value="ECO:0007669"/>
    <property type="project" value="EnsemblFungi"/>
</dbReference>
<dbReference type="GO" id="GO:0005634">
    <property type="term" value="C:nucleus"/>
    <property type="evidence" value="ECO:0000318"/>
    <property type="project" value="GO_Central"/>
</dbReference>
<dbReference type="GO" id="GO:0005681">
    <property type="term" value="C:spliceosomal complex"/>
    <property type="evidence" value="ECO:0007669"/>
    <property type="project" value="EnsemblFungi"/>
</dbReference>
<dbReference type="GO" id="GO:0005524">
    <property type="term" value="F:ATP binding"/>
    <property type="evidence" value="ECO:0007669"/>
    <property type="project" value="UniProtKB-KW"/>
</dbReference>
<dbReference type="GO" id="GO:0016887">
    <property type="term" value="F:ATP hydrolysis activity"/>
    <property type="evidence" value="ECO:0007669"/>
    <property type="project" value="RHEA"/>
</dbReference>
<dbReference type="GO" id="GO:0031370">
    <property type="term" value="F:eukaryotic initiation factor 4G binding"/>
    <property type="evidence" value="ECO:0007669"/>
    <property type="project" value="EnsemblFungi"/>
</dbReference>
<dbReference type="GO" id="GO:0051880">
    <property type="term" value="F:G-quadruplex DNA binding"/>
    <property type="evidence" value="ECO:0007669"/>
    <property type="project" value="EnsemblFungi"/>
</dbReference>
<dbReference type="GO" id="GO:0002151">
    <property type="term" value="F:G-quadruplex RNA binding"/>
    <property type="evidence" value="ECO:0007669"/>
    <property type="project" value="EnsemblFungi"/>
</dbReference>
<dbReference type="GO" id="GO:0003729">
    <property type="term" value="F:mRNA binding"/>
    <property type="evidence" value="ECO:0000318"/>
    <property type="project" value="GO_Central"/>
</dbReference>
<dbReference type="GO" id="GO:0003724">
    <property type="term" value="F:RNA helicase activity"/>
    <property type="evidence" value="ECO:0000318"/>
    <property type="project" value="GO_Central"/>
</dbReference>
<dbReference type="GO" id="GO:0033592">
    <property type="term" value="F:RNA strand annealing activity"/>
    <property type="evidence" value="ECO:0007669"/>
    <property type="project" value="EnsemblFungi"/>
</dbReference>
<dbReference type="GO" id="GO:0003743">
    <property type="term" value="F:translation initiation factor activity"/>
    <property type="evidence" value="ECO:0007669"/>
    <property type="project" value="UniProtKB-KW"/>
</dbReference>
<dbReference type="GO" id="GO:0002183">
    <property type="term" value="P:cytoplasmic translational initiation"/>
    <property type="evidence" value="ECO:0007669"/>
    <property type="project" value="EnsemblFungi"/>
</dbReference>
<dbReference type="GO" id="GO:1990625">
    <property type="term" value="P:negative regulation of cytoplasmic translational initiation in response to stress"/>
    <property type="evidence" value="ECO:0007669"/>
    <property type="project" value="EnsemblFungi"/>
</dbReference>
<dbReference type="GO" id="GO:1901195">
    <property type="term" value="P:positive regulation of formation of translation preinitiation complex"/>
    <property type="evidence" value="ECO:0007669"/>
    <property type="project" value="EnsemblFungi"/>
</dbReference>
<dbReference type="GO" id="GO:0031047">
    <property type="term" value="P:regulatory ncRNA-mediated gene silencing"/>
    <property type="evidence" value="ECO:0007669"/>
    <property type="project" value="EnsemblFungi"/>
</dbReference>
<dbReference type="GO" id="GO:0000390">
    <property type="term" value="P:spliceosomal complex disassembly"/>
    <property type="evidence" value="ECO:0007669"/>
    <property type="project" value="EnsemblFungi"/>
</dbReference>
<dbReference type="CDD" id="cd18787">
    <property type="entry name" value="SF2_C_DEAD"/>
    <property type="match status" value="1"/>
</dbReference>
<dbReference type="FunFam" id="3.40.50.300:FF:000160">
    <property type="entry name" value="ATP-dependent RNA helicase DDX3X"/>
    <property type="match status" value="1"/>
</dbReference>
<dbReference type="FunFam" id="3.40.50.300:FF:000008">
    <property type="entry name" value="ATP-dependent RNA helicase RhlB"/>
    <property type="match status" value="1"/>
</dbReference>
<dbReference type="Gene3D" id="3.40.50.300">
    <property type="entry name" value="P-loop containing nucleotide triphosphate hydrolases"/>
    <property type="match status" value="2"/>
</dbReference>
<dbReference type="InterPro" id="IPR011545">
    <property type="entry name" value="DEAD/DEAH_box_helicase_dom"/>
</dbReference>
<dbReference type="InterPro" id="IPR014001">
    <property type="entry name" value="Helicase_ATP-bd"/>
</dbReference>
<dbReference type="InterPro" id="IPR001650">
    <property type="entry name" value="Helicase_C-like"/>
</dbReference>
<dbReference type="InterPro" id="IPR027417">
    <property type="entry name" value="P-loop_NTPase"/>
</dbReference>
<dbReference type="InterPro" id="IPR000629">
    <property type="entry name" value="RNA-helicase_DEAD-box_CS"/>
</dbReference>
<dbReference type="InterPro" id="IPR014014">
    <property type="entry name" value="RNA_helicase_DEAD_Q_motif"/>
</dbReference>
<dbReference type="PANTHER" id="PTHR47958">
    <property type="entry name" value="ATP-DEPENDENT RNA HELICASE DBP3"/>
    <property type="match status" value="1"/>
</dbReference>
<dbReference type="Pfam" id="PF00270">
    <property type="entry name" value="DEAD"/>
    <property type="match status" value="1"/>
</dbReference>
<dbReference type="Pfam" id="PF00271">
    <property type="entry name" value="Helicase_C"/>
    <property type="match status" value="1"/>
</dbReference>
<dbReference type="SMART" id="SM00487">
    <property type="entry name" value="DEXDc"/>
    <property type="match status" value="1"/>
</dbReference>
<dbReference type="SMART" id="SM00490">
    <property type="entry name" value="HELICc"/>
    <property type="match status" value="1"/>
</dbReference>
<dbReference type="SUPFAM" id="SSF52540">
    <property type="entry name" value="P-loop containing nucleoside triphosphate hydrolases"/>
    <property type="match status" value="1"/>
</dbReference>
<dbReference type="PROSITE" id="PS00039">
    <property type="entry name" value="DEAD_ATP_HELICASE"/>
    <property type="match status" value="1"/>
</dbReference>
<dbReference type="PROSITE" id="PS51192">
    <property type="entry name" value="HELICASE_ATP_BIND_1"/>
    <property type="match status" value="1"/>
</dbReference>
<dbReference type="PROSITE" id="PS51194">
    <property type="entry name" value="HELICASE_CTER"/>
    <property type="match status" value="1"/>
</dbReference>
<dbReference type="PROSITE" id="PS51195">
    <property type="entry name" value="Q_MOTIF"/>
    <property type="match status" value="1"/>
</dbReference>